<accession>A1VXG4</accession>
<accession>Q46100</accession>
<protein>
    <recommendedName>
        <fullName>Cytolethal distending toxin subunit A</fullName>
        <shortName>CDT A</shortName>
    </recommendedName>
</protein>
<reference key="1">
    <citation type="journal article" date="1996" name="Infect. Immun.">
        <title>Prevalence of cytolethal distending toxin production in Campylobacter jejuni and relatedness of Campylobacter sp. cdtB gene.</title>
        <authorList>
            <person name="Pickett C.L."/>
            <person name="Pesci E.C."/>
            <person name="Cottle D.L."/>
            <person name="Russell G."/>
            <person name="Erdem A.N."/>
            <person name="Zeytin H."/>
        </authorList>
    </citation>
    <scope>NUCLEOTIDE SEQUENCE [GENOMIC DNA]</scope>
</reference>
<reference key="2">
    <citation type="submission" date="2006-12" db="EMBL/GenBank/DDBJ databases">
        <authorList>
            <person name="Fouts D.E."/>
            <person name="Nelson K.E."/>
            <person name="Sebastian Y."/>
        </authorList>
    </citation>
    <scope>NUCLEOTIDE SEQUENCE [LARGE SCALE GENOMIC DNA]</scope>
    <source>
        <strain>81-176</strain>
    </source>
</reference>
<keyword id="KW-0998">Cell outer membrane</keyword>
<keyword id="KW-0430">Lectin</keyword>
<keyword id="KW-0449">Lipoprotein</keyword>
<keyword id="KW-0472">Membrane</keyword>
<keyword id="KW-0564">Palmitate</keyword>
<keyword id="KW-0732">Signal</keyword>
<keyword id="KW-0800">Toxin</keyword>
<keyword id="KW-0843">Virulence</keyword>
<name>CDTA_CAMJJ</name>
<feature type="signal peptide" evidence="3">
    <location>
        <begin position="1"/>
        <end position="19"/>
    </location>
</feature>
<feature type="chain" id="PRO_0000281897" description="Cytolethal distending toxin subunit A">
    <location>
        <begin position="20"/>
        <end position="268"/>
    </location>
</feature>
<feature type="domain" description="Ricin B-type lectin" evidence="2">
    <location>
        <begin position="112"/>
        <end position="252"/>
    </location>
</feature>
<feature type="region of interest" description="Mediates binding to target cells" evidence="1">
    <location>
        <begin position="129"/>
        <end position="140"/>
    </location>
</feature>
<feature type="lipid moiety-binding region" description="N-palmitoyl cysteine" evidence="4">
    <location>
        <position position="20"/>
    </location>
</feature>
<feature type="lipid moiety-binding region" description="S-diacylglycerol cysteine" evidence="4">
    <location>
        <position position="20"/>
    </location>
</feature>
<gene>
    <name type="primary">cdtA</name>
    <name type="ordered locus">CJJ81176_0116</name>
</gene>
<proteinExistence type="inferred from homology"/>
<dbReference type="EMBL" id="U51121">
    <property type="protein sequence ID" value="AAB06707.1"/>
    <property type="molecule type" value="Genomic_DNA"/>
</dbReference>
<dbReference type="EMBL" id="CP000538">
    <property type="protein sequence ID" value="EAQ71960.1"/>
    <property type="molecule type" value="Genomic_DNA"/>
</dbReference>
<dbReference type="RefSeq" id="WP_002852021.1">
    <property type="nucleotide sequence ID" value="NC_008787.1"/>
</dbReference>
<dbReference type="SMR" id="A1VXG4"/>
<dbReference type="KEGG" id="cjj:CJJ81176_0116"/>
<dbReference type="eggNOG" id="ENOG50347HZ">
    <property type="taxonomic scope" value="Bacteria"/>
</dbReference>
<dbReference type="HOGENOM" id="CLU_090932_0_0_7"/>
<dbReference type="Proteomes" id="UP000000646">
    <property type="component" value="Chromosome"/>
</dbReference>
<dbReference type="GO" id="GO:0009279">
    <property type="term" value="C:cell outer membrane"/>
    <property type="evidence" value="ECO:0007669"/>
    <property type="project" value="UniProtKB-SubCell"/>
</dbReference>
<dbReference type="GO" id="GO:0030246">
    <property type="term" value="F:carbohydrate binding"/>
    <property type="evidence" value="ECO:0007669"/>
    <property type="project" value="UniProtKB-KW"/>
</dbReference>
<dbReference type="GO" id="GO:0090729">
    <property type="term" value="F:toxin activity"/>
    <property type="evidence" value="ECO:0007669"/>
    <property type="project" value="UniProtKB-KW"/>
</dbReference>
<dbReference type="CDD" id="cd23414">
    <property type="entry name" value="beta-trefoil_Ricin_CdtA"/>
    <property type="match status" value="1"/>
</dbReference>
<dbReference type="Gene3D" id="2.80.10.50">
    <property type="match status" value="1"/>
</dbReference>
<dbReference type="InterPro" id="IPR015957">
    <property type="entry name" value="CDtoxinA"/>
</dbReference>
<dbReference type="InterPro" id="IPR003558">
    <property type="entry name" value="CDtoxinA/C"/>
</dbReference>
<dbReference type="InterPro" id="IPR035992">
    <property type="entry name" value="Ricin_B-like_lectins"/>
</dbReference>
<dbReference type="Pfam" id="PF03498">
    <property type="entry name" value="CDtoxinA"/>
    <property type="match status" value="1"/>
</dbReference>
<dbReference type="PIRSF" id="PIRSF036516">
    <property type="entry name" value="CDT_A"/>
    <property type="match status" value="1"/>
</dbReference>
<dbReference type="SUPFAM" id="SSF50370">
    <property type="entry name" value="Ricin B-like lectins"/>
    <property type="match status" value="1"/>
</dbReference>
<dbReference type="PROSITE" id="PS51257">
    <property type="entry name" value="PROKAR_LIPOPROTEIN"/>
    <property type="match status" value="1"/>
</dbReference>
<dbReference type="PROSITE" id="PS50231">
    <property type="entry name" value="RICIN_B_LECTIN"/>
    <property type="match status" value="1"/>
</dbReference>
<comment type="function">
    <text>CDTs are cytotoxins which induce cell distension, growth arrest in G2/M phase, nucleus swelling, and chromatin fragmentation in HeLa cells.</text>
</comment>
<comment type="subunit">
    <text>Heterotrimer of 3 subunits, CdtA, CdtB and CdtC.</text>
</comment>
<comment type="subcellular location">
    <subcellularLocation>
        <location evidence="4">Cell outer membrane</location>
        <topology evidence="4">Lipid-anchor</topology>
    </subcellularLocation>
</comment>
<organism>
    <name type="scientific">Campylobacter jejuni subsp. jejuni serotype O:23/36 (strain 81-176)</name>
    <dbReference type="NCBI Taxonomy" id="354242"/>
    <lineage>
        <taxon>Bacteria</taxon>
        <taxon>Pseudomonadati</taxon>
        <taxon>Campylobacterota</taxon>
        <taxon>Epsilonproteobacteria</taxon>
        <taxon>Campylobacterales</taxon>
        <taxon>Campylobacteraceae</taxon>
        <taxon>Campylobacter</taxon>
    </lineage>
</organism>
<evidence type="ECO:0000250" key="1"/>
<evidence type="ECO:0000255" key="2">
    <source>
        <dbReference type="PROSITE-ProRule" id="PRU00174"/>
    </source>
</evidence>
<evidence type="ECO:0000255" key="3">
    <source>
        <dbReference type="PROSITE-ProRule" id="PRU00303"/>
    </source>
</evidence>
<evidence type="ECO:0000305" key="4"/>
<sequence length="268" mass="29919">MQKIIVFILCCFMTFFLYACSSKFENVNPLGRSFGEFEDTDPLKLGLEPTFPTNQEIPSLISGADLVPITPITPPLTRTSNSANNNAANGINPRFKDEAFNDVLIFENRPAVSDFLTILGPSGAALTVWALAQGNWIWGYTLIDSKGFGDARVWQLLLYPNDFAMIKNAKTNTCLNAYGNGIVHYPCDASNHAQMWKLIPMSNTAVQIKNLGNGKCIQAPITNLYGDFHKVFKIFTVECAKKDNFDQQWFLTTPPFTAKPLYRQGEVR</sequence>